<accession>P00445</accession>
<accession>D6VWS3</accession>
<accession>Q68HB2</accession>
<dbReference type="EC" id="1.15.1.1" evidence="2"/>
<dbReference type="EMBL" id="J03279">
    <property type="protein sequence ID" value="AAA34543.1"/>
    <property type="molecule type" value="Genomic_DNA"/>
</dbReference>
<dbReference type="EMBL" id="AY690619">
    <property type="protein sequence ID" value="AAT99430.1"/>
    <property type="molecule type" value="Genomic_DNA"/>
</dbReference>
<dbReference type="EMBL" id="Z49604">
    <property type="protein sequence ID" value="CAA89634.1"/>
    <property type="molecule type" value="Genomic_DNA"/>
</dbReference>
<dbReference type="EMBL" id="AY558073">
    <property type="protein sequence ID" value="AAS56399.1"/>
    <property type="molecule type" value="Genomic_DNA"/>
</dbReference>
<dbReference type="EMBL" id="BK006943">
    <property type="protein sequence ID" value="DAA08889.1"/>
    <property type="molecule type" value="Genomic_DNA"/>
</dbReference>
<dbReference type="PIR" id="A36171">
    <property type="entry name" value="DSBYC"/>
</dbReference>
<dbReference type="RefSeq" id="NP_012638.1">
    <property type="nucleotide sequence ID" value="NM_001181762.1"/>
</dbReference>
<dbReference type="PDB" id="1B4L">
    <property type="method" value="X-ray"/>
    <property type="resolution" value="1.80 A"/>
    <property type="chains" value="A=2-154"/>
</dbReference>
<dbReference type="PDB" id="1B4T">
    <property type="method" value="X-ray"/>
    <property type="resolution" value="1.80 A"/>
    <property type="chains" value="A=2-154"/>
</dbReference>
<dbReference type="PDB" id="1F18">
    <property type="method" value="X-ray"/>
    <property type="resolution" value="1.70 A"/>
    <property type="chains" value="A=1-154"/>
</dbReference>
<dbReference type="PDB" id="1F1A">
    <property type="method" value="X-ray"/>
    <property type="resolution" value="1.80 A"/>
    <property type="chains" value="A=1-154"/>
</dbReference>
<dbReference type="PDB" id="1F1D">
    <property type="method" value="X-ray"/>
    <property type="resolution" value="2.10 A"/>
    <property type="chains" value="A=1-154"/>
</dbReference>
<dbReference type="PDB" id="1F1G">
    <property type="method" value="X-ray"/>
    <property type="resolution" value="1.35 A"/>
    <property type="chains" value="A/B/C/D/E/F=1-154"/>
</dbReference>
<dbReference type="PDB" id="1JCV">
    <property type="method" value="X-ray"/>
    <property type="resolution" value="1.55 A"/>
    <property type="chains" value="A=2-154"/>
</dbReference>
<dbReference type="PDB" id="1JK9">
    <property type="method" value="X-ray"/>
    <property type="resolution" value="2.90 A"/>
    <property type="chains" value="A/C=2-154"/>
</dbReference>
<dbReference type="PDB" id="1SDY">
    <property type="method" value="X-ray"/>
    <property type="resolution" value="2.50 A"/>
    <property type="chains" value="A/B/C/D=2-154"/>
</dbReference>
<dbReference type="PDB" id="1YAZ">
    <property type="method" value="X-ray"/>
    <property type="resolution" value="1.70 A"/>
    <property type="chains" value="A=2-154"/>
</dbReference>
<dbReference type="PDB" id="1YSO">
    <property type="method" value="X-ray"/>
    <property type="resolution" value="1.73 A"/>
    <property type="chains" value="A=2-154"/>
</dbReference>
<dbReference type="PDB" id="2JCW">
    <property type="method" value="X-ray"/>
    <property type="resolution" value="1.70 A"/>
    <property type="chains" value="A=2-154"/>
</dbReference>
<dbReference type="PDBsum" id="1B4L"/>
<dbReference type="PDBsum" id="1B4T"/>
<dbReference type="PDBsum" id="1F18"/>
<dbReference type="PDBsum" id="1F1A"/>
<dbReference type="PDBsum" id="1F1D"/>
<dbReference type="PDBsum" id="1F1G"/>
<dbReference type="PDBsum" id="1JCV"/>
<dbReference type="PDBsum" id="1JK9"/>
<dbReference type="PDBsum" id="1SDY"/>
<dbReference type="PDBsum" id="1YAZ"/>
<dbReference type="PDBsum" id="1YSO"/>
<dbReference type="PDBsum" id="2JCW"/>
<dbReference type="SMR" id="P00445"/>
<dbReference type="BioGRID" id="33860">
    <property type="interactions" value="287"/>
</dbReference>
<dbReference type="ComplexPortal" id="CPX-2267">
    <property type="entry name" value="SOD1-CCS1 superoxide dismutase heterodimer"/>
</dbReference>
<dbReference type="ComplexPortal" id="CPX-2896">
    <property type="entry name" value="[Cu-Zn] Superoxide dismutase complex"/>
</dbReference>
<dbReference type="DIP" id="DIP-5859N"/>
<dbReference type="FunCoup" id="P00445">
    <property type="interactions" value="1032"/>
</dbReference>
<dbReference type="IntAct" id="P00445">
    <property type="interactions" value="32"/>
</dbReference>
<dbReference type="MINT" id="P00445"/>
<dbReference type="STRING" id="4932.YJR104C"/>
<dbReference type="MoonProt" id="P00445"/>
<dbReference type="GlyGen" id="P00445">
    <property type="glycosylation" value="1 site"/>
</dbReference>
<dbReference type="iPTMnet" id="P00445"/>
<dbReference type="PaxDb" id="4932-YJR104C"/>
<dbReference type="PeptideAtlas" id="P00445"/>
<dbReference type="TopDownProteomics" id="P00445"/>
<dbReference type="EnsemblFungi" id="YJR104C_mRNA">
    <property type="protein sequence ID" value="YJR104C"/>
    <property type="gene ID" value="YJR104C"/>
</dbReference>
<dbReference type="GeneID" id="853568"/>
<dbReference type="KEGG" id="sce:YJR104C"/>
<dbReference type="AGR" id="SGD:S000003865"/>
<dbReference type="SGD" id="S000003865">
    <property type="gene designation" value="SOD1"/>
</dbReference>
<dbReference type="VEuPathDB" id="FungiDB:YJR104C"/>
<dbReference type="eggNOG" id="KOG0441">
    <property type="taxonomic scope" value="Eukaryota"/>
</dbReference>
<dbReference type="GeneTree" id="ENSGT00940000168521"/>
<dbReference type="HOGENOM" id="CLU_056632_4_2_1"/>
<dbReference type="InParanoid" id="P00445"/>
<dbReference type="OMA" id="AQRGFHI"/>
<dbReference type="OrthoDB" id="2015551at2759"/>
<dbReference type="BioCyc" id="YEAST:MONOMER3O-1629"/>
<dbReference type="Reactome" id="R-SCE-114608">
    <property type="pathway name" value="Platelet degranulation"/>
</dbReference>
<dbReference type="Reactome" id="R-SCE-3299685">
    <property type="pathway name" value="Detoxification of Reactive Oxygen Species"/>
</dbReference>
<dbReference type="BioGRID-ORCS" id="853568">
    <property type="hits" value="7 hits in 10 CRISPR screens"/>
</dbReference>
<dbReference type="EvolutionaryTrace" id="P00445"/>
<dbReference type="PHI-base" id="PHI:2813"/>
<dbReference type="PRO" id="PR:P00445"/>
<dbReference type="Proteomes" id="UP000002311">
    <property type="component" value="Chromosome X"/>
</dbReference>
<dbReference type="RNAct" id="P00445">
    <property type="molecule type" value="protein"/>
</dbReference>
<dbReference type="GO" id="GO:0005829">
    <property type="term" value="C:cytosol"/>
    <property type="evidence" value="ECO:0000314"/>
    <property type="project" value="SGD"/>
</dbReference>
<dbReference type="GO" id="GO:0005758">
    <property type="term" value="C:mitochondrial intermembrane space"/>
    <property type="evidence" value="ECO:0000314"/>
    <property type="project" value="SGD"/>
</dbReference>
<dbReference type="GO" id="GO:0005739">
    <property type="term" value="C:mitochondrion"/>
    <property type="evidence" value="ECO:0007005"/>
    <property type="project" value="SGD"/>
</dbReference>
<dbReference type="GO" id="GO:0005634">
    <property type="term" value="C:nucleus"/>
    <property type="evidence" value="ECO:0000314"/>
    <property type="project" value="SGD"/>
</dbReference>
<dbReference type="GO" id="GO:1902693">
    <property type="term" value="C:superoxide dismutase complex"/>
    <property type="evidence" value="ECO:0000353"/>
    <property type="project" value="ComplexPortal"/>
</dbReference>
<dbReference type="GO" id="GO:0005507">
    <property type="term" value="F:copper ion binding"/>
    <property type="evidence" value="ECO:0000318"/>
    <property type="project" value="GO_Central"/>
</dbReference>
<dbReference type="GO" id="GO:0016670">
    <property type="term" value="F:oxidoreductase activity, acting on a sulfur group of donors, oxygen as acceptor"/>
    <property type="evidence" value="ECO:0000314"/>
    <property type="project" value="SGD"/>
</dbReference>
<dbReference type="GO" id="GO:0004784">
    <property type="term" value="F:superoxide dismutase activity"/>
    <property type="evidence" value="ECO:0000314"/>
    <property type="project" value="SGD"/>
</dbReference>
<dbReference type="GO" id="GO:1990748">
    <property type="term" value="P:cellular detoxification"/>
    <property type="evidence" value="ECO:0000315"/>
    <property type="project" value="SGD"/>
</dbReference>
<dbReference type="GO" id="GO:0034599">
    <property type="term" value="P:cellular response to oxidative stress"/>
    <property type="evidence" value="ECO:0000315"/>
    <property type="project" value="SGD"/>
</dbReference>
<dbReference type="GO" id="GO:0006825">
    <property type="term" value="P:copper ion transport"/>
    <property type="evidence" value="ECO:0000314"/>
    <property type="project" value="ComplexPortal"/>
</dbReference>
<dbReference type="GO" id="GO:0031505">
    <property type="term" value="P:fungal-type cell wall organization"/>
    <property type="evidence" value="ECO:0000315"/>
    <property type="project" value="SGD"/>
</dbReference>
<dbReference type="GO" id="GO:0006878">
    <property type="term" value="P:intracellular copper ion homeostasis"/>
    <property type="evidence" value="ECO:0000315"/>
    <property type="project" value="SGD"/>
</dbReference>
<dbReference type="GO" id="GO:0006882">
    <property type="term" value="P:intracellular zinc ion homeostasis"/>
    <property type="evidence" value="ECO:0000315"/>
    <property type="project" value="SGD"/>
</dbReference>
<dbReference type="GO" id="GO:1901856">
    <property type="term" value="P:negative regulation of cellular respiration"/>
    <property type="evidence" value="ECO:0000315"/>
    <property type="project" value="SGD"/>
</dbReference>
<dbReference type="GO" id="GO:0045944">
    <property type="term" value="P:positive regulation of transcription by RNA polymerase II"/>
    <property type="evidence" value="ECO:0000315"/>
    <property type="project" value="SGD"/>
</dbReference>
<dbReference type="GO" id="GO:0050821">
    <property type="term" value="P:protein stabilization"/>
    <property type="evidence" value="ECO:0000315"/>
    <property type="project" value="SGD"/>
</dbReference>
<dbReference type="GO" id="GO:0019430">
    <property type="term" value="P:removal of superoxide radicals"/>
    <property type="evidence" value="ECO:0000314"/>
    <property type="project" value="ComplexPortal"/>
</dbReference>
<dbReference type="GO" id="GO:0006801">
    <property type="term" value="P:superoxide metabolic process"/>
    <property type="evidence" value="ECO:0000315"/>
    <property type="project" value="SGD"/>
</dbReference>
<dbReference type="CDD" id="cd00305">
    <property type="entry name" value="Cu-Zn_Superoxide_Dismutase"/>
    <property type="match status" value="1"/>
</dbReference>
<dbReference type="FunFam" id="2.60.40.200:FF:000001">
    <property type="entry name" value="Superoxide dismutase [Cu-Zn]"/>
    <property type="match status" value="1"/>
</dbReference>
<dbReference type="Gene3D" id="2.60.40.200">
    <property type="entry name" value="Superoxide dismutase, copper/zinc binding domain"/>
    <property type="match status" value="1"/>
</dbReference>
<dbReference type="InterPro" id="IPR036423">
    <property type="entry name" value="SOD-like_Cu/Zn_dom_sf"/>
</dbReference>
<dbReference type="InterPro" id="IPR024134">
    <property type="entry name" value="SOD_Cu/Zn_/chaperone"/>
</dbReference>
<dbReference type="InterPro" id="IPR018152">
    <property type="entry name" value="SOD_Cu/Zn_BS"/>
</dbReference>
<dbReference type="InterPro" id="IPR001424">
    <property type="entry name" value="SOD_Cu_Zn_dom"/>
</dbReference>
<dbReference type="PANTHER" id="PTHR10003">
    <property type="entry name" value="SUPEROXIDE DISMUTASE CU-ZN -RELATED"/>
    <property type="match status" value="1"/>
</dbReference>
<dbReference type="Pfam" id="PF00080">
    <property type="entry name" value="Sod_Cu"/>
    <property type="match status" value="1"/>
</dbReference>
<dbReference type="PRINTS" id="PR00068">
    <property type="entry name" value="CUZNDISMTASE"/>
</dbReference>
<dbReference type="SUPFAM" id="SSF49329">
    <property type="entry name" value="Cu,Zn superoxide dismutase-like"/>
    <property type="match status" value="1"/>
</dbReference>
<dbReference type="PROSITE" id="PS00087">
    <property type="entry name" value="SOD_CU_ZN_1"/>
    <property type="match status" value="1"/>
</dbReference>
<dbReference type="PROSITE" id="PS00332">
    <property type="entry name" value="SOD_CU_ZN_2"/>
    <property type="match status" value="1"/>
</dbReference>
<comment type="function">
    <text evidence="1">Destroys radicals which are normally produced within the cells and which are toxic to biological systems.</text>
</comment>
<comment type="catalytic activity">
    <reaction evidence="2">
        <text>2 superoxide + 2 H(+) = H2O2 + O2</text>
        <dbReference type="Rhea" id="RHEA:20696"/>
        <dbReference type="ChEBI" id="CHEBI:15378"/>
        <dbReference type="ChEBI" id="CHEBI:15379"/>
        <dbReference type="ChEBI" id="CHEBI:16240"/>
        <dbReference type="ChEBI" id="CHEBI:18421"/>
        <dbReference type="EC" id="1.15.1.1"/>
    </reaction>
</comment>
<comment type="cofactor">
    <cofactor evidence="3 12">
        <name>Cu cation</name>
        <dbReference type="ChEBI" id="CHEBI:23378"/>
    </cofactor>
    <text evidence="3 12">Binds 1 copper ion per subunit.</text>
</comment>
<comment type="cofactor">
    <cofactor evidence="3 5">
        <name>Zn(2+)</name>
        <dbReference type="ChEBI" id="CHEBI:29105"/>
    </cofactor>
    <text evidence="3 5">Binds 1 zinc ion per subunit.</text>
</comment>
<comment type="subunit">
    <text evidence="3 5 12">Homodimer in holo form. In apo form, heterodimer with CCS1. Zinc-binding at 'His-16' of CCS1 and Glu-43 of apo-SOD1 is required for this heterodimerization.</text>
</comment>
<comment type="interaction">
    <interactant intactId="EBI-17635">
        <id>P00445</id>
    </interactant>
    <interactant intactId="EBI-10287">
        <id>P40202</id>
        <label>CCS1</label>
    </interactant>
    <organismsDiffer>false</organismsDiffer>
    <experiments>3</experiments>
</comment>
<comment type="interaction">
    <interactant intactId="EBI-17635">
        <id>P00445</id>
    </interactant>
    <interactant intactId="EBI-4718">
        <id>P23291</id>
        <label>YCK1</label>
    </interactant>
    <organismsDiffer>false</organismsDiffer>
    <experiments>2</experiments>
</comment>
<comment type="subcellular location">
    <subcellularLocation>
        <location evidence="4">Cytoplasm</location>
    </subcellularLocation>
    <subcellularLocation>
        <location evidence="4 10">Mitochondrion intermembrane space</location>
    </subcellularLocation>
    <text evidence="4">A small percentage (around 1-5 percent) localizes to the mitochondrial intermembrane space.</text>
</comment>
<comment type="miscellaneous">
    <text evidence="6">Present with 519000 molecules/cell in log phase SD medium.</text>
</comment>
<comment type="similarity">
    <text evidence="16">Belongs to the Cu-Zn superoxide dismutase family.</text>
</comment>
<gene>
    <name evidence="15" type="primary">SOD1</name>
    <name type="ordered locus">YJR104C</name>
    <name type="ORF">J1968</name>
</gene>
<evidence type="ECO:0000250" key="1">
    <source>
        <dbReference type="UniProtKB" id="P00442"/>
    </source>
</evidence>
<evidence type="ECO:0000250" key="2">
    <source>
        <dbReference type="UniProtKB" id="P85978"/>
    </source>
</evidence>
<evidence type="ECO:0000269" key="3">
    <source>
    </source>
</evidence>
<evidence type="ECO:0000269" key="4">
    <source>
    </source>
</evidence>
<evidence type="ECO:0000269" key="5">
    <source>
    </source>
</evidence>
<evidence type="ECO:0000269" key="6">
    <source>
    </source>
</evidence>
<evidence type="ECO:0000269" key="7">
    <source>
    </source>
</evidence>
<evidence type="ECO:0000269" key="8">
    <source>
    </source>
</evidence>
<evidence type="ECO:0000269" key="9">
    <source>
    </source>
</evidence>
<evidence type="ECO:0000269" key="10">
    <source>
    </source>
</evidence>
<evidence type="ECO:0000269" key="11">
    <source>
    </source>
</evidence>
<evidence type="ECO:0000269" key="12">
    <source>
    </source>
</evidence>
<evidence type="ECO:0000269" key="13">
    <source ref="6"/>
</evidence>
<evidence type="ECO:0000269" key="14">
    <source ref="8"/>
</evidence>
<evidence type="ECO:0000303" key="15">
    <source>
    </source>
</evidence>
<evidence type="ECO:0000305" key="16"/>
<evidence type="ECO:0007744" key="17">
    <source>
    </source>
</evidence>
<evidence type="ECO:0007744" key="18">
    <source>
    </source>
</evidence>
<evidence type="ECO:0007744" key="19">
    <source>
    </source>
</evidence>
<evidence type="ECO:0007744" key="20">
    <source>
    </source>
</evidence>
<evidence type="ECO:0007829" key="21">
    <source>
        <dbReference type="PDB" id="1F1G"/>
    </source>
</evidence>
<evidence type="ECO:0007829" key="22">
    <source>
        <dbReference type="PDB" id="1SDY"/>
    </source>
</evidence>
<protein>
    <recommendedName>
        <fullName>Superoxide dismutase [Cu-Zn]</fullName>
        <ecNumber evidence="2">1.15.1.1</ecNumber>
    </recommendedName>
</protein>
<keyword id="KW-0002">3D-structure</keyword>
<keyword id="KW-0049">Antioxidant</keyword>
<keyword id="KW-0186">Copper</keyword>
<keyword id="KW-0963">Cytoplasm</keyword>
<keyword id="KW-0903">Direct protein sequencing</keyword>
<keyword id="KW-1015">Disulfide bond</keyword>
<keyword id="KW-1017">Isopeptide bond</keyword>
<keyword id="KW-0479">Metal-binding</keyword>
<keyword id="KW-0496">Mitochondrion</keyword>
<keyword id="KW-0560">Oxidoreductase</keyword>
<keyword id="KW-0597">Phosphoprotein</keyword>
<keyword id="KW-1185">Reference proteome</keyword>
<keyword id="KW-0832">Ubl conjugation</keyword>
<keyword id="KW-0862">Zinc</keyword>
<proteinExistence type="evidence at protein level"/>
<sequence length="154" mass="15855">MVQAVAVLKGDAGVSGVVKFEQASESEPTTVSYEIAGNSPNAERGFHIHEFGDATNGCVSAGPHFNPFKKTHGAPTDEVRHVGDMGNVKTDENGVAKGSFKDSLIKLIGPTSVVGRSVVIHAGQDDLGKGDTEESLKTGNAGPRPACGVIGLTN</sequence>
<feature type="initiator methionine" description="Removed" evidence="11 13 14">
    <location>
        <position position="1"/>
    </location>
</feature>
<feature type="chain" id="PRO_0000164129" description="Superoxide dismutase [Cu-Zn]">
    <location>
        <begin position="2"/>
        <end position="154"/>
    </location>
</feature>
<feature type="binding site" description="in apo form" evidence="3 5">
    <location>
        <position position="43"/>
    </location>
    <ligand>
        <name>Zn(2+)</name>
        <dbReference type="ChEBI" id="CHEBI:29105"/>
        <label>2</label>
        <note>ligand shared with CCS1</note>
    </ligand>
</feature>
<feature type="binding site" evidence="3 12">
    <location>
        <position position="47"/>
    </location>
    <ligand>
        <name>Cu cation</name>
        <dbReference type="ChEBI" id="CHEBI:23378"/>
        <note>catalytic</note>
    </ligand>
</feature>
<feature type="binding site" evidence="3 12">
    <location>
        <position position="49"/>
    </location>
    <ligand>
        <name>Cu cation</name>
        <dbReference type="ChEBI" id="CHEBI:23378"/>
        <note>catalytic</note>
    </ligand>
</feature>
<feature type="binding site" evidence="3 12">
    <location>
        <position position="64"/>
    </location>
    <ligand>
        <name>Cu cation</name>
        <dbReference type="ChEBI" id="CHEBI:23378"/>
        <note>catalytic</note>
    </ligand>
</feature>
<feature type="binding site" evidence="3 5">
    <location>
        <position position="64"/>
    </location>
    <ligand>
        <name>Zn(2+)</name>
        <dbReference type="ChEBI" id="CHEBI:29105"/>
        <label>1</label>
        <note>structural</note>
    </ligand>
</feature>
<feature type="binding site" evidence="3 5">
    <location>
        <position position="72"/>
    </location>
    <ligand>
        <name>Zn(2+)</name>
        <dbReference type="ChEBI" id="CHEBI:29105"/>
        <label>1</label>
        <note>structural</note>
    </ligand>
</feature>
<feature type="binding site" evidence="3 5">
    <location>
        <position position="81"/>
    </location>
    <ligand>
        <name>Zn(2+)</name>
        <dbReference type="ChEBI" id="CHEBI:29105"/>
        <label>1</label>
        <note>structural</note>
    </ligand>
</feature>
<feature type="binding site" evidence="3 5">
    <location>
        <position position="84"/>
    </location>
    <ligand>
        <name>Zn(2+)</name>
        <dbReference type="ChEBI" id="CHEBI:29105"/>
        <label>1</label>
        <note>structural</note>
    </ligand>
</feature>
<feature type="binding site" evidence="3 12">
    <location>
        <position position="121"/>
    </location>
    <ligand>
        <name>Cu cation</name>
        <dbReference type="ChEBI" id="CHEBI:23378"/>
        <note>catalytic</note>
    </ligand>
</feature>
<feature type="binding site" evidence="16">
    <location>
        <position position="144"/>
    </location>
    <ligand>
        <name>substrate</name>
    </ligand>
</feature>
<feature type="modified residue" description="Phosphoserine" evidence="19">
    <location>
        <position position="26"/>
    </location>
</feature>
<feature type="modified residue" description="Phosphoserine" evidence="17 19 20">
    <location>
        <position position="39"/>
    </location>
</feature>
<feature type="modified residue" description="Phosphoserine" evidence="18 19 20">
    <location>
        <position position="99"/>
    </location>
</feature>
<feature type="modified residue" description="Phosphoserine" evidence="18">
    <location>
        <position position="117"/>
    </location>
</feature>
<feature type="modified residue" description="Phosphothreonine" evidence="18">
    <location>
        <position position="132"/>
    </location>
</feature>
<feature type="modified residue" description="Phosphothreonine" evidence="20">
    <location>
        <position position="138"/>
    </location>
</feature>
<feature type="disulfide bond">
    <location>
        <begin position="58"/>
        <end position="147"/>
    </location>
</feature>
<feature type="disulfide bond" description="Interchain (with C-229 in CCS1); in linked form">
    <location>
        <position position="58"/>
    </location>
</feature>
<feature type="cross-link" description="Glycyl lysine isopeptide (Lys-Gly) (interchain with G-Cter in SUMO)" evidence="8">
    <location>
        <position position="19"/>
    </location>
</feature>
<feature type="cross-link" description="Glycyl lysine isopeptide (Lys-Gly) (interchain with G-Cter in SUMO)" evidence="8">
    <location>
        <position position="70"/>
    </location>
</feature>
<feature type="mutagenesis site" description="Does not enable copper chaperone-independent activation." evidence="7">
    <original>G</original>
    <variation>K</variation>
    <location>
        <position position="123"/>
    </location>
</feature>
<feature type="mutagenesis site" description="Does not enable copper chaperone-independent activation." evidence="7">
    <original>DT</original>
    <variation>GN</variation>
    <location>
        <begin position="131"/>
        <end position="132"/>
    </location>
</feature>
<feature type="mutagenesis site" description="Enables copper chaperone-independent activation; when associated with A-145 or with L-145." evidence="7 9">
    <original>P</original>
    <variation>A</variation>
    <variation>S</variation>
    <location>
        <position position="143"/>
    </location>
</feature>
<feature type="mutagenesis site" description="Enables copper chaperone-independent activation; when associated with A-143 or with S-143." evidence="7 9">
    <original>P</original>
    <variation>A</variation>
    <variation>L</variation>
    <location>
        <position position="145"/>
    </location>
</feature>
<feature type="sequence conflict" description="In Ref. 7; AA sequence." evidence="16" ref="7">
    <original>N</original>
    <variation>D</variation>
    <location>
        <position position="56"/>
    </location>
</feature>
<feature type="sequence conflict" description="In Ref. 7; AA sequence." evidence="16" ref="7">
    <original>N</original>
    <variation>D</variation>
    <location>
        <position position="93"/>
    </location>
</feature>
<feature type="strand" evidence="21">
    <location>
        <begin position="3"/>
        <end position="9"/>
    </location>
</feature>
<feature type="strand" evidence="21">
    <location>
        <begin position="11"/>
        <end position="13"/>
    </location>
</feature>
<feature type="strand" evidence="21">
    <location>
        <begin position="15"/>
        <end position="21"/>
    </location>
</feature>
<feature type="strand" evidence="22">
    <location>
        <begin position="23"/>
        <end position="27"/>
    </location>
</feature>
<feature type="strand" evidence="21">
    <location>
        <begin position="29"/>
        <end position="37"/>
    </location>
</feature>
<feature type="strand" evidence="21">
    <location>
        <begin position="43"/>
        <end position="50"/>
    </location>
</feature>
<feature type="turn" evidence="21">
    <location>
        <begin position="55"/>
        <end position="58"/>
    </location>
</feature>
<feature type="helix" evidence="21">
    <location>
        <begin position="59"/>
        <end position="61"/>
    </location>
</feature>
<feature type="strand" evidence="21">
    <location>
        <begin position="77"/>
        <end position="80"/>
    </location>
</feature>
<feature type="strand" evidence="21">
    <location>
        <begin position="84"/>
        <end position="89"/>
    </location>
</feature>
<feature type="strand" evidence="21">
    <location>
        <begin position="96"/>
        <end position="104"/>
    </location>
</feature>
<feature type="strand" evidence="21">
    <location>
        <begin position="107"/>
        <end position="109"/>
    </location>
</feature>
<feature type="strand" evidence="21">
    <location>
        <begin position="116"/>
        <end position="120"/>
    </location>
</feature>
<feature type="strand" evidence="21">
    <location>
        <begin position="130"/>
        <end position="132"/>
    </location>
</feature>
<feature type="helix" evidence="21">
    <location>
        <begin position="135"/>
        <end position="138"/>
    </location>
</feature>
<feature type="strand" evidence="21">
    <location>
        <begin position="146"/>
        <end position="149"/>
    </location>
</feature>
<feature type="strand" evidence="21">
    <location>
        <begin position="151"/>
        <end position="153"/>
    </location>
</feature>
<name>SODC_YEAST</name>
<organism>
    <name type="scientific">Saccharomyces cerevisiae (strain ATCC 204508 / S288c)</name>
    <name type="common">Baker's yeast</name>
    <dbReference type="NCBI Taxonomy" id="559292"/>
    <lineage>
        <taxon>Eukaryota</taxon>
        <taxon>Fungi</taxon>
        <taxon>Dikarya</taxon>
        <taxon>Ascomycota</taxon>
        <taxon>Saccharomycotina</taxon>
        <taxon>Saccharomycetes</taxon>
        <taxon>Saccharomycetales</taxon>
        <taxon>Saccharomycetaceae</taxon>
        <taxon>Saccharomyces</taxon>
    </lineage>
</organism>
<reference key="1">
    <citation type="journal article" date="1988" name="Proc. Natl. Acad. Sci. U.S.A.">
        <title>The copper, zinc-superoxide dismutase gene of Saccharomyces cerevisiae: cloning, sequencing, and biological activity.</title>
        <authorList>
            <person name="Bermingham-Mcdonogh O."/>
            <person name="Gralla E."/>
            <person name="Valentine J."/>
        </authorList>
    </citation>
    <scope>NUCLEOTIDE SEQUENCE [GENOMIC DNA]</scope>
</reference>
<reference key="2">
    <citation type="submission" date="2004-07" db="EMBL/GenBank/DDBJ databases">
        <title>Cloning and sequence analysis of copper, zinc-superoxide dismutase gene.</title>
        <authorList>
            <person name="Ping Y."/>
        </authorList>
    </citation>
    <scope>NUCLEOTIDE SEQUENCE [GENOMIC DNA]</scope>
</reference>
<reference key="3">
    <citation type="journal article" date="1996" name="EMBO J.">
        <title>Complete nucleotide sequence of Saccharomyces cerevisiae chromosome X.</title>
        <authorList>
            <person name="Galibert F."/>
            <person name="Alexandraki D."/>
            <person name="Baur A."/>
            <person name="Boles E."/>
            <person name="Chalwatzis N."/>
            <person name="Chuat J.-C."/>
            <person name="Coster F."/>
            <person name="Cziepluch C."/>
            <person name="de Haan M."/>
            <person name="Domdey H."/>
            <person name="Durand P."/>
            <person name="Entian K.-D."/>
            <person name="Gatius M."/>
            <person name="Goffeau A."/>
            <person name="Grivell L.A."/>
            <person name="Hennemann A."/>
            <person name="Herbert C.J."/>
            <person name="Heumann K."/>
            <person name="Hilger F."/>
            <person name="Hollenberg C.P."/>
            <person name="Huang M.-E."/>
            <person name="Jacq C."/>
            <person name="Jauniaux J.-C."/>
            <person name="Katsoulou C."/>
            <person name="Kirchrath L."/>
            <person name="Kleine K."/>
            <person name="Kordes E."/>
            <person name="Koetter P."/>
            <person name="Liebl S."/>
            <person name="Louis E.J."/>
            <person name="Manus V."/>
            <person name="Mewes H.-W."/>
            <person name="Miosga T."/>
            <person name="Obermaier B."/>
            <person name="Perea J."/>
            <person name="Pohl T.M."/>
            <person name="Portetelle D."/>
            <person name="Pujol A."/>
            <person name="Purnelle B."/>
            <person name="Ramezani Rad M."/>
            <person name="Rasmussen S.W."/>
            <person name="Rose M."/>
            <person name="Rossau R."/>
            <person name="Schaaff-Gerstenschlaeger I."/>
            <person name="Smits P.H.M."/>
            <person name="Scarcez T."/>
            <person name="Soriano N."/>
            <person name="To Van D."/>
            <person name="Tzermia M."/>
            <person name="Van Broekhoven A."/>
            <person name="Vandenbol M."/>
            <person name="Wedler H."/>
            <person name="von Wettstein D."/>
            <person name="Wambutt R."/>
            <person name="Zagulski M."/>
            <person name="Zollner A."/>
            <person name="Karpfinger-Hartl L."/>
        </authorList>
    </citation>
    <scope>NUCLEOTIDE SEQUENCE [LARGE SCALE GENOMIC DNA]</scope>
    <source>
        <strain>ATCC 204508 / S288c</strain>
    </source>
</reference>
<reference key="4">
    <citation type="journal article" date="2014" name="G3 (Bethesda)">
        <title>The reference genome sequence of Saccharomyces cerevisiae: Then and now.</title>
        <authorList>
            <person name="Engel S.R."/>
            <person name="Dietrich F.S."/>
            <person name="Fisk D.G."/>
            <person name="Binkley G."/>
            <person name="Balakrishnan R."/>
            <person name="Costanzo M.C."/>
            <person name="Dwight S.S."/>
            <person name="Hitz B.C."/>
            <person name="Karra K."/>
            <person name="Nash R.S."/>
            <person name="Weng S."/>
            <person name="Wong E.D."/>
            <person name="Lloyd P."/>
            <person name="Skrzypek M.S."/>
            <person name="Miyasato S.R."/>
            <person name="Simison M."/>
            <person name="Cherry J.M."/>
        </authorList>
    </citation>
    <scope>GENOME REANNOTATION</scope>
    <source>
        <strain>ATCC 204508 / S288c</strain>
    </source>
</reference>
<reference key="5">
    <citation type="journal article" date="2007" name="Genome Res.">
        <title>Approaching a complete repository of sequence-verified protein-encoding clones for Saccharomyces cerevisiae.</title>
        <authorList>
            <person name="Hu Y."/>
            <person name="Rolfs A."/>
            <person name="Bhullar B."/>
            <person name="Murthy T.V.S."/>
            <person name="Zhu C."/>
            <person name="Berger M.F."/>
            <person name="Camargo A.A."/>
            <person name="Kelley F."/>
            <person name="McCarron S."/>
            <person name="Jepson D."/>
            <person name="Richardson A."/>
            <person name="Raphael J."/>
            <person name="Moreira D."/>
            <person name="Taycher E."/>
            <person name="Zuo D."/>
            <person name="Mohr S."/>
            <person name="Kane M.F."/>
            <person name="Williamson J."/>
            <person name="Simpson A.J.G."/>
            <person name="Bulyk M.L."/>
            <person name="Harlow E."/>
            <person name="Marsischky G."/>
            <person name="Kolodner R.D."/>
            <person name="LaBaer J."/>
        </authorList>
    </citation>
    <scope>NUCLEOTIDE SEQUENCE [GENOMIC DNA]</scope>
    <source>
        <strain>ATCC 204508 / S288c</strain>
    </source>
</reference>
<reference key="6">
    <citation type="journal article" date="1979" name="Carlsberg Res. Commun.">
        <title>The complete amino acid sequence of copper, zinc superoxide dismutase from Saccharomyces cerevisiae.</title>
        <authorList>
            <person name="Johansen J.T."/>
            <person name="Overballe-Petersen C."/>
            <person name="Martin B."/>
            <person name="Hasemann V."/>
            <person name="Svendsen I."/>
        </authorList>
    </citation>
    <scope>PROTEIN SEQUENCE OF 2-154</scope>
</reference>
<reference key="7">
    <citation type="journal article" date="1980" name="J. Biol. Chem.">
        <title>The amino acid sequence of copper-zinc superoxide dismutase from bakers' yeast.</title>
        <authorList>
            <person name="Steinman H.M."/>
        </authorList>
    </citation>
    <scope>PROTEIN SEQUENCE OF 2-154</scope>
</reference>
<reference key="8">
    <citation type="submission" date="1996-02" db="UniProtKB">
        <authorList>
            <person name="Frutiger S."/>
            <person name="Hughes G.J."/>
            <person name="Sanchez J.-C."/>
            <person name="Hochstrasser D.F."/>
        </authorList>
    </citation>
    <scope>PROTEIN SEQUENCE OF 2-11</scope>
    <source>
        <strain>ATCC 26786 / X2180-1A</strain>
    </source>
</reference>
<reference key="9">
    <citation type="journal article" date="2001" name="J. Biol. Chem.">
        <title>A fraction of yeast Cu,Zn-superoxide dismutase and its metallochaperone, CCS, localize to the intermembrane space of mitochondria. A physiological role for SOD1 in guarding against mitochondrial oxidative damage.</title>
        <authorList>
            <person name="Sturtz L.A."/>
            <person name="Diekert K."/>
            <person name="Jensen L.T."/>
            <person name="Lill R."/>
            <person name="Culotta V.C."/>
        </authorList>
    </citation>
    <scope>SUBCELLULAR LOCATION</scope>
</reference>
<reference key="10">
    <citation type="journal article" date="2003" name="Nature">
        <title>Global analysis of protein expression in yeast.</title>
        <authorList>
            <person name="Ghaemmaghami S."/>
            <person name="Huh W.-K."/>
            <person name="Bower K."/>
            <person name="Howson R.W."/>
            <person name="Belle A."/>
            <person name="Dephoure N."/>
            <person name="O'Shea E.K."/>
            <person name="Weissman J.S."/>
        </authorList>
    </citation>
    <scope>LEVEL OF PROTEIN EXPRESSION [LARGE SCALE ANALYSIS]</scope>
</reference>
<reference key="11">
    <citation type="journal article" date="2004" name="J. Biol. Chem.">
        <title>Global analyses of sumoylated proteins in Saccharomyces cerevisiae. Induction of protein sumoylation by cellular stresses.</title>
        <authorList>
            <person name="Zhou W."/>
            <person name="Ryan J.J."/>
            <person name="Zhou H."/>
        </authorList>
    </citation>
    <scope>SUMOYLATION [LARGE SCALE ANALYSIS] AT LYS-19 AND LYS-70</scope>
    <scope>IDENTIFICATION BY MASS SPECTROMETRY</scope>
</reference>
<reference key="12">
    <citation type="journal article" date="2004" name="Proc. Natl. Acad. Sci. U.S.A.">
        <title>Mechanisms for activating Cu- and Zn-containing superoxide dismutase in the absence of the CCS Cu chaperone.</title>
        <authorList>
            <person name="Carroll M.C."/>
            <person name="Girouard J.B."/>
            <person name="Ulloa J.L."/>
            <person name="Subramaniam J.R."/>
            <person name="Wong P.C."/>
            <person name="Valentine J.S."/>
            <person name="Culotta V.C."/>
        </authorList>
    </citation>
    <scope>MUTAGENESIS OF GLY-123; 131-ASP-THR-132; PRO-143 AND PRO-145</scope>
</reference>
<reference key="13">
    <citation type="journal article" date="2005" name="J. Biol. Chem.">
        <title>Activation of CuZn superoxide dismutases from Caenorhabditis elegans does not require the copper chaperone CCS.</title>
        <authorList>
            <person name="Jensen L.T."/>
            <person name="Culotta V.C."/>
        </authorList>
    </citation>
    <scope>MUTAGENESIS OF PRO-143 AND PRO-145</scope>
</reference>
<reference key="14">
    <citation type="journal article" date="2005" name="Mol. Cell. Proteomics">
        <title>Quantitative phosphoproteomics applied to the yeast pheromone signaling pathway.</title>
        <authorList>
            <person name="Gruhler A."/>
            <person name="Olsen J.V."/>
            <person name="Mohammed S."/>
            <person name="Mortensen P."/>
            <person name="Faergeman N.J."/>
            <person name="Mann M."/>
            <person name="Jensen O.N."/>
        </authorList>
    </citation>
    <scope>PHOSPHORYLATION [LARGE SCALE ANALYSIS] AT SER-39</scope>
    <scope>IDENTIFICATION BY MASS SPECTROMETRY [LARGE SCALE ANALYSIS]</scope>
    <source>
        <strain>YAL6B</strain>
    </source>
</reference>
<reference key="15">
    <citation type="journal article" date="2007" name="Proc. Natl. Acad. Sci. U.S.A.">
        <title>Analysis of phosphorylation sites on proteins from Saccharomyces cerevisiae by electron transfer dissociation (ETD) mass spectrometry.</title>
        <authorList>
            <person name="Chi A."/>
            <person name="Huttenhower C."/>
            <person name="Geer L.Y."/>
            <person name="Coon J.J."/>
            <person name="Syka J.E.P."/>
            <person name="Bai D.L."/>
            <person name="Shabanowitz J."/>
            <person name="Burke D.J."/>
            <person name="Troyanskaya O.G."/>
            <person name="Hunt D.F."/>
        </authorList>
    </citation>
    <scope>PHOSPHORYLATION [LARGE SCALE ANALYSIS] AT SER-99; SER-117 AND THR-132</scope>
    <scope>IDENTIFICATION BY MASS SPECTROMETRY [LARGE SCALE ANALYSIS]</scope>
</reference>
<reference key="16">
    <citation type="journal article" date="2008" name="Mol. Cell. Proteomics">
        <title>A multidimensional chromatography technology for in-depth phosphoproteome analysis.</title>
        <authorList>
            <person name="Albuquerque C.P."/>
            <person name="Smolka M.B."/>
            <person name="Payne S.H."/>
            <person name="Bafna V."/>
            <person name="Eng J."/>
            <person name="Zhou H."/>
        </authorList>
    </citation>
    <scope>PHOSPHORYLATION [LARGE SCALE ANALYSIS] AT SER-26; SER-39 AND SER-99</scope>
    <scope>IDENTIFICATION BY MASS SPECTROMETRY [LARGE SCALE ANALYSIS]</scope>
</reference>
<reference key="17">
    <citation type="journal article" date="2009" name="Science">
        <title>Global analysis of Cdk1 substrate phosphorylation sites provides insights into evolution.</title>
        <authorList>
            <person name="Holt L.J."/>
            <person name="Tuch B.B."/>
            <person name="Villen J."/>
            <person name="Johnson A.D."/>
            <person name="Gygi S.P."/>
            <person name="Morgan D.O."/>
        </authorList>
    </citation>
    <scope>PHOSPHORYLATION [LARGE SCALE ANALYSIS] AT SER-39; SER-99 AND THR-138</scope>
    <scope>IDENTIFICATION BY MASS SPECTROMETRY [LARGE SCALE ANALYSIS]</scope>
</reference>
<reference key="18">
    <citation type="journal article" date="2012" name="Mol. Cell. Proteomics">
        <title>Intermembrane space proteome of yeast mitochondria.</title>
        <authorList>
            <person name="Voegtle F.N."/>
            <person name="Burkhart J.M."/>
            <person name="Rao S."/>
            <person name="Gerbeth C."/>
            <person name="Hinrichs J."/>
            <person name="Martinou J.C."/>
            <person name="Chacinska A."/>
            <person name="Sickmann A."/>
            <person name="Zahedi R.P."/>
            <person name="Meisinger C."/>
        </authorList>
    </citation>
    <scope>IDENTIFICATION BY MASS SPECTROMETRY</scope>
    <scope>SUBCELLULAR LOCATION [LARGE SCALE ANALYSIS]</scope>
</reference>
<reference key="19">
    <citation type="journal article" date="1991" name="Acta Crystallogr. B">
        <title>Structure solution and molecular dynamics refinement of the yeast Cu,Zn enzyme superoxide dismutase.</title>
        <authorList>
            <person name="Djinovic K."/>
            <person name="Gatti G."/>
            <person name="Coda A."/>
            <person name="Antolini L."/>
            <person name="Pelosi G."/>
            <person name="Desideri A."/>
            <person name="Falconi M."/>
            <person name="Marmocchi F."/>
            <person name="Rotilio G."/>
            <person name="Bolognesi M."/>
        </authorList>
    </citation>
    <scope>X-RAY CRYSTALLOGRAPHY (2.5 ANGSTROMS)</scope>
</reference>
<reference key="20">
    <citation type="journal article" date="1992" name="J. Mol. Biol.">
        <title>Crystal structure of yeast Cu,Zn superoxide dismutase. Crystallographic refinement at 2.5-A resolution.</title>
        <authorList>
            <person name="Djinovic K."/>
            <person name="Gatti G."/>
            <person name="Coda A."/>
            <person name="Antolini L."/>
            <person name="Pelosi G."/>
            <person name="Desideri A."/>
            <person name="Falconi M."/>
            <person name="Marmocchi F."/>
            <person name="Rotilio G."/>
            <person name="Bolognesi M."/>
        </authorList>
    </citation>
    <scope>X-RAY CRYSTALLOGRAPHY (2.5 ANGSTROMS)</scope>
</reference>
<reference key="21">
    <citation type="journal article" date="1996" name="Biochemistry">
        <title>Unusual trigonal-planar copper configuration revealed in the atomic structure of yeast copper-zinc superoxide dismutase.</title>
        <authorList>
            <person name="Ogihara N.L."/>
            <person name="Parge H.E."/>
            <person name="Hart P.J."/>
            <person name="Weiss M.S."/>
            <person name="Goto J.J."/>
            <person name="Crane B.R."/>
            <person name="Tsang J."/>
            <person name="Slater K."/>
            <person name="Roe J.A."/>
            <person name="Valentine J.S."/>
            <person name="Eisenberg D."/>
            <person name="Tainer J.A."/>
        </authorList>
    </citation>
    <scope>X-RAY CRYSTALLOGRAPHY (1.7 ANGSTROMS) IN COMPLEX WITH COPPER AND ZINC IONS</scope>
</reference>
<reference key="22">
    <citation type="journal article" date="1999" name="Biochemistry">
        <title>A structure-based mechanism for copper-zinc superoxide dismutase.</title>
        <authorList>
            <person name="Hart P.J."/>
            <person name="Balbirnie M.M."/>
            <person name="Ogihara N.L."/>
            <person name="Nersissian A.M."/>
            <person name="Weiss M.S."/>
            <person name="Valentine J.S."/>
            <person name="Eisenberg D."/>
        </authorList>
    </citation>
    <scope>X-RAY CRYSTALLOGRAPHY (1.7 ANGSTROMS) IN COMPLEX WITH SUBSTRATE ANALOG; COPPER AND ZINC</scope>
    <scope>DISULFIDE BONDS</scope>
</reference>
<reference key="23">
    <citation type="journal article" date="2001" name="Nat. Struct. Biol.">
        <title>Heterodimeric structure of superoxide dismutase in complex with its metallochaperone.</title>
        <authorList>
            <person name="Lamb A.L."/>
            <person name="Torres A.S."/>
            <person name="O'Halloran T.V."/>
            <person name="Rosenzweig A.C."/>
        </authorList>
    </citation>
    <scope>X-RAY CRYSTALLOGRAPHY (2.9 ANGSTROMS) IN COMPLEX WITH ZINC AND CCS1</scope>
    <scope>SUBUNIT</scope>
    <scope>DISULFIDE BONDS</scope>
</reference>